<evidence type="ECO:0000255" key="1">
    <source>
        <dbReference type="HAMAP-Rule" id="MF_00815"/>
    </source>
</evidence>
<name>ATPG_METEP</name>
<protein>
    <recommendedName>
        <fullName evidence="1">ATP synthase gamma chain</fullName>
    </recommendedName>
    <alternativeName>
        <fullName evidence="1">ATP synthase F1 sector gamma subunit</fullName>
    </alternativeName>
    <alternativeName>
        <fullName evidence="1">F-ATPase gamma subunit</fullName>
    </alternativeName>
</protein>
<keyword id="KW-0066">ATP synthesis</keyword>
<keyword id="KW-0997">Cell inner membrane</keyword>
<keyword id="KW-1003">Cell membrane</keyword>
<keyword id="KW-0139">CF(1)</keyword>
<keyword id="KW-0375">Hydrogen ion transport</keyword>
<keyword id="KW-0406">Ion transport</keyword>
<keyword id="KW-0472">Membrane</keyword>
<keyword id="KW-0813">Transport</keyword>
<sequence>MPSLKDLRNRITSVKATQKITKAMQMVAAAKLRRAQNAAENGRPYAERMAQVLGNLAGNLIGGVGAPRLLTGTGQDRVHLLVVCTGDRGLAGAFNSSIARLARDHANRLMADGKTVKIITIGKKGLDVLRRQFRDQIIASRDIRGNKPVDYPFAAEIADDILARFEAGEFDVATLFYSEFRSVISQIPTAQKLIPAELPTAEGAAATGAGSDAAMEFEPNEETILETLLPKNLTVQIFRALLENAASEQGARMSAMDSATRNAGEMIKKQTLIYNRTRQAMITKELIEIISGAEAL</sequence>
<reference key="1">
    <citation type="submission" date="2007-12" db="EMBL/GenBank/DDBJ databases">
        <title>Complete sequence of Methylobacterium extorquens PA1.</title>
        <authorList>
            <consortium name="US DOE Joint Genome Institute"/>
            <person name="Copeland A."/>
            <person name="Lucas S."/>
            <person name="Lapidus A."/>
            <person name="Barry K."/>
            <person name="Glavina del Rio T."/>
            <person name="Dalin E."/>
            <person name="Tice H."/>
            <person name="Pitluck S."/>
            <person name="Saunders E."/>
            <person name="Brettin T."/>
            <person name="Bruce D."/>
            <person name="Detter J.C."/>
            <person name="Han C."/>
            <person name="Schmutz J."/>
            <person name="Larimer F."/>
            <person name="Land M."/>
            <person name="Hauser L."/>
            <person name="Kyrpides N."/>
            <person name="Kim E."/>
            <person name="Marx C."/>
            <person name="Richardson P."/>
        </authorList>
    </citation>
    <scope>NUCLEOTIDE SEQUENCE [LARGE SCALE GENOMIC DNA]</scope>
    <source>
        <strain>PA1</strain>
    </source>
</reference>
<organism>
    <name type="scientific">Methylorubrum extorquens (strain PA1)</name>
    <name type="common">Methylobacterium extorquens</name>
    <dbReference type="NCBI Taxonomy" id="419610"/>
    <lineage>
        <taxon>Bacteria</taxon>
        <taxon>Pseudomonadati</taxon>
        <taxon>Pseudomonadota</taxon>
        <taxon>Alphaproteobacteria</taxon>
        <taxon>Hyphomicrobiales</taxon>
        <taxon>Methylobacteriaceae</taxon>
        <taxon>Methylorubrum</taxon>
    </lineage>
</organism>
<accession>A9W2R2</accession>
<dbReference type="EMBL" id="CP000908">
    <property type="protein sequence ID" value="ABY29868.1"/>
    <property type="molecule type" value="Genomic_DNA"/>
</dbReference>
<dbReference type="RefSeq" id="WP_012253085.1">
    <property type="nucleotide sequence ID" value="NC_010172.1"/>
</dbReference>
<dbReference type="SMR" id="A9W2R2"/>
<dbReference type="KEGG" id="mex:Mext_1467"/>
<dbReference type="eggNOG" id="COG0224">
    <property type="taxonomic scope" value="Bacteria"/>
</dbReference>
<dbReference type="HOGENOM" id="CLU_050669_0_1_5"/>
<dbReference type="BioCyc" id="MEXT419610:MEXT_RS07455-MONOMER"/>
<dbReference type="GO" id="GO:0005886">
    <property type="term" value="C:plasma membrane"/>
    <property type="evidence" value="ECO:0007669"/>
    <property type="project" value="UniProtKB-SubCell"/>
</dbReference>
<dbReference type="GO" id="GO:0045259">
    <property type="term" value="C:proton-transporting ATP synthase complex"/>
    <property type="evidence" value="ECO:0007669"/>
    <property type="project" value="UniProtKB-KW"/>
</dbReference>
<dbReference type="GO" id="GO:0005524">
    <property type="term" value="F:ATP binding"/>
    <property type="evidence" value="ECO:0007669"/>
    <property type="project" value="UniProtKB-UniRule"/>
</dbReference>
<dbReference type="GO" id="GO:0046933">
    <property type="term" value="F:proton-transporting ATP synthase activity, rotational mechanism"/>
    <property type="evidence" value="ECO:0007669"/>
    <property type="project" value="UniProtKB-UniRule"/>
</dbReference>
<dbReference type="GO" id="GO:0042777">
    <property type="term" value="P:proton motive force-driven plasma membrane ATP synthesis"/>
    <property type="evidence" value="ECO:0007669"/>
    <property type="project" value="UniProtKB-UniRule"/>
</dbReference>
<dbReference type="CDD" id="cd12151">
    <property type="entry name" value="F1-ATPase_gamma"/>
    <property type="match status" value="1"/>
</dbReference>
<dbReference type="FunFam" id="1.10.287.80:FF:000001">
    <property type="entry name" value="ATP synthase gamma chain"/>
    <property type="match status" value="1"/>
</dbReference>
<dbReference type="FunFam" id="1.10.287.80:FF:000003">
    <property type="entry name" value="ATP synthase gamma chain, chloroplastic"/>
    <property type="match status" value="1"/>
</dbReference>
<dbReference type="Gene3D" id="3.40.1380.10">
    <property type="match status" value="1"/>
</dbReference>
<dbReference type="Gene3D" id="1.10.287.80">
    <property type="entry name" value="ATP synthase, gamma subunit, helix hairpin domain"/>
    <property type="match status" value="1"/>
</dbReference>
<dbReference type="HAMAP" id="MF_00815">
    <property type="entry name" value="ATP_synth_gamma_bact"/>
    <property type="match status" value="1"/>
</dbReference>
<dbReference type="InterPro" id="IPR035968">
    <property type="entry name" value="ATP_synth_F1_ATPase_gsu"/>
</dbReference>
<dbReference type="InterPro" id="IPR000131">
    <property type="entry name" value="ATP_synth_F1_gsu"/>
</dbReference>
<dbReference type="InterPro" id="IPR023632">
    <property type="entry name" value="ATP_synth_F1_gsu_CS"/>
</dbReference>
<dbReference type="NCBIfam" id="TIGR01146">
    <property type="entry name" value="ATPsyn_F1gamma"/>
    <property type="match status" value="1"/>
</dbReference>
<dbReference type="NCBIfam" id="NF004146">
    <property type="entry name" value="PRK05621.1-4"/>
    <property type="match status" value="1"/>
</dbReference>
<dbReference type="PANTHER" id="PTHR11693">
    <property type="entry name" value="ATP SYNTHASE GAMMA CHAIN"/>
    <property type="match status" value="1"/>
</dbReference>
<dbReference type="PANTHER" id="PTHR11693:SF22">
    <property type="entry name" value="ATP SYNTHASE SUBUNIT GAMMA, MITOCHONDRIAL"/>
    <property type="match status" value="1"/>
</dbReference>
<dbReference type="Pfam" id="PF00231">
    <property type="entry name" value="ATP-synt"/>
    <property type="match status" value="1"/>
</dbReference>
<dbReference type="PIRSF" id="PIRSF039089">
    <property type="entry name" value="ATP_synthase_gamma"/>
    <property type="match status" value="1"/>
</dbReference>
<dbReference type="PRINTS" id="PR00126">
    <property type="entry name" value="ATPASEGAMMA"/>
</dbReference>
<dbReference type="SUPFAM" id="SSF52943">
    <property type="entry name" value="ATP synthase (F1-ATPase), gamma subunit"/>
    <property type="match status" value="1"/>
</dbReference>
<dbReference type="PROSITE" id="PS00153">
    <property type="entry name" value="ATPASE_GAMMA"/>
    <property type="match status" value="1"/>
</dbReference>
<comment type="function">
    <text evidence="1">Produces ATP from ADP in the presence of a proton gradient across the membrane. The gamma chain is believed to be important in regulating ATPase activity and the flow of protons through the CF(0) complex.</text>
</comment>
<comment type="subunit">
    <text evidence="1">F-type ATPases have 2 components, CF(1) - the catalytic core - and CF(0) - the membrane proton channel. CF(1) has five subunits: alpha(3), beta(3), gamma(1), delta(1), epsilon(1). CF(0) has three main subunits: a, b and c.</text>
</comment>
<comment type="subcellular location">
    <subcellularLocation>
        <location evidence="1">Cell inner membrane</location>
        <topology evidence="1">Peripheral membrane protein</topology>
    </subcellularLocation>
</comment>
<comment type="similarity">
    <text evidence="1">Belongs to the ATPase gamma chain family.</text>
</comment>
<gene>
    <name evidence="1" type="primary">atpG</name>
    <name type="ordered locus">Mext_1467</name>
</gene>
<feature type="chain" id="PRO_1000134175" description="ATP synthase gamma chain">
    <location>
        <begin position="1"/>
        <end position="296"/>
    </location>
</feature>
<proteinExistence type="inferred from homology"/>